<keyword id="KW-0028">Amino-acid biosynthesis</keyword>
<keyword id="KW-0055">Arginine biosynthesis</keyword>
<keyword id="KW-0067">ATP-binding</keyword>
<keyword id="KW-0963">Cytoplasm</keyword>
<keyword id="KW-0418">Kinase</keyword>
<keyword id="KW-0547">Nucleotide-binding</keyword>
<keyword id="KW-0808">Transferase</keyword>
<evidence type="ECO:0000255" key="1">
    <source>
        <dbReference type="HAMAP-Rule" id="MF_00082"/>
    </source>
</evidence>
<accession>B3H084</accession>
<comment type="function">
    <text evidence="1">Catalyzes the ATP-dependent phosphorylation of N-acetyl-L-glutamate.</text>
</comment>
<comment type="catalytic activity">
    <reaction evidence="1">
        <text>N-acetyl-L-glutamate + ATP = N-acetyl-L-glutamyl 5-phosphate + ADP</text>
        <dbReference type="Rhea" id="RHEA:14629"/>
        <dbReference type="ChEBI" id="CHEBI:30616"/>
        <dbReference type="ChEBI" id="CHEBI:44337"/>
        <dbReference type="ChEBI" id="CHEBI:57936"/>
        <dbReference type="ChEBI" id="CHEBI:456216"/>
        <dbReference type="EC" id="2.7.2.8"/>
    </reaction>
</comment>
<comment type="pathway">
    <text evidence="1">Amino-acid biosynthesis; L-arginine biosynthesis; N(2)-acetyl-L-ornithine from L-glutamate: step 2/4.</text>
</comment>
<comment type="subcellular location">
    <subcellularLocation>
        <location evidence="1">Cytoplasm</location>
    </subcellularLocation>
</comment>
<comment type="similarity">
    <text evidence="1">Belongs to the acetylglutamate kinase family. ArgB subfamily.</text>
</comment>
<protein>
    <recommendedName>
        <fullName evidence="1">Acetylglutamate kinase</fullName>
        <ecNumber evidence="1">2.7.2.8</ecNumber>
    </recommendedName>
    <alternativeName>
        <fullName evidence="1">N-acetyl-L-glutamate 5-phosphotransferase</fullName>
    </alternativeName>
    <alternativeName>
        <fullName evidence="1">NAG kinase</fullName>
        <shortName evidence="1">NAGK</shortName>
    </alternativeName>
</protein>
<organism>
    <name type="scientific">Actinobacillus pleuropneumoniae serotype 7 (strain AP76)</name>
    <dbReference type="NCBI Taxonomy" id="537457"/>
    <lineage>
        <taxon>Bacteria</taxon>
        <taxon>Pseudomonadati</taxon>
        <taxon>Pseudomonadota</taxon>
        <taxon>Gammaproteobacteria</taxon>
        <taxon>Pasteurellales</taxon>
        <taxon>Pasteurellaceae</taxon>
        <taxon>Actinobacillus</taxon>
    </lineage>
</organism>
<reference key="1">
    <citation type="submission" date="2008-06" db="EMBL/GenBank/DDBJ databases">
        <title>Genome and proteome analysis of A. pleuropneumoniae serotype 7.</title>
        <authorList>
            <person name="Linke B."/>
            <person name="Buettner F."/>
            <person name="Martinez-Arias R."/>
            <person name="Goesmann A."/>
            <person name="Baltes N."/>
            <person name="Tegetmeyer H."/>
            <person name="Singh M."/>
            <person name="Gerlach G.F."/>
        </authorList>
    </citation>
    <scope>NUCLEOTIDE SEQUENCE [LARGE SCALE GENOMIC DNA]</scope>
    <source>
        <strain>AP76</strain>
    </source>
</reference>
<proteinExistence type="inferred from homology"/>
<name>ARGB_ACTP7</name>
<sequence length="284" mass="30275">MLQNEVENFANLLEQATVYLAPYQEKIIVVKYGGNAMINEDLKKLVMQDILLLNQLGVKVVLVHGGGPEISQGVKLLGKEPQFINGLRVTDQDTINVVLQMLAGKVNKSLVALLKGKGVGLCGIDANMLQCEKLQAEVDYGFVGEIVKVNTQLLELALSANLIPVISTVGVDDQGVAYNINADTVASEIAMALGAAKLVSMTDIAGLLRDRFDESTLIPEVEVSEVQGLIDQGIIAGGMIPKIACCTDFINAGGIEANIIDGRVPHAILVSLFGGKNGTLFYKK</sequence>
<dbReference type="EC" id="2.7.2.8" evidence="1"/>
<dbReference type="EMBL" id="CP001091">
    <property type="protein sequence ID" value="ACE60896.1"/>
    <property type="molecule type" value="Genomic_DNA"/>
</dbReference>
<dbReference type="RefSeq" id="WP_005596099.1">
    <property type="nucleotide sequence ID" value="NC_010939.1"/>
</dbReference>
<dbReference type="SMR" id="B3H084"/>
<dbReference type="GeneID" id="48598391"/>
<dbReference type="KEGG" id="apa:APP7_0244"/>
<dbReference type="HOGENOM" id="CLU_053680_0_0_6"/>
<dbReference type="UniPathway" id="UPA00068">
    <property type="reaction ID" value="UER00107"/>
</dbReference>
<dbReference type="Proteomes" id="UP000001226">
    <property type="component" value="Chromosome"/>
</dbReference>
<dbReference type="GO" id="GO:0005737">
    <property type="term" value="C:cytoplasm"/>
    <property type="evidence" value="ECO:0007669"/>
    <property type="project" value="UniProtKB-SubCell"/>
</dbReference>
<dbReference type="GO" id="GO:0003991">
    <property type="term" value="F:acetylglutamate kinase activity"/>
    <property type="evidence" value="ECO:0007669"/>
    <property type="project" value="UniProtKB-UniRule"/>
</dbReference>
<dbReference type="GO" id="GO:0005524">
    <property type="term" value="F:ATP binding"/>
    <property type="evidence" value="ECO:0007669"/>
    <property type="project" value="UniProtKB-UniRule"/>
</dbReference>
<dbReference type="GO" id="GO:0042450">
    <property type="term" value="P:arginine biosynthetic process via ornithine"/>
    <property type="evidence" value="ECO:0007669"/>
    <property type="project" value="UniProtKB-UniRule"/>
</dbReference>
<dbReference type="GO" id="GO:0006526">
    <property type="term" value="P:L-arginine biosynthetic process"/>
    <property type="evidence" value="ECO:0007669"/>
    <property type="project" value="UniProtKB-UniPathway"/>
</dbReference>
<dbReference type="CDD" id="cd04250">
    <property type="entry name" value="AAK_NAGK-C"/>
    <property type="match status" value="1"/>
</dbReference>
<dbReference type="FunFam" id="3.40.1160.10:FF:000004">
    <property type="entry name" value="Acetylglutamate kinase"/>
    <property type="match status" value="1"/>
</dbReference>
<dbReference type="Gene3D" id="3.40.1160.10">
    <property type="entry name" value="Acetylglutamate kinase-like"/>
    <property type="match status" value="1"/>
</dbReference>
<dbReference type="HAMAP" id="MF_00082">
    <property type="entry name" value="ArgB"/>
    <property type="match status" value="1"/>
</dbReference>
<dbReference type="InterPro" id="IPR036393">
    <property type="entry name" value="AceGlu_kinase-like_sf"/>
</dbReference>
<dbReference type="InterPro" id="IPR004662">
    <property type="entry name" value="AcgluKinase_fam"/>
</dbReference>
<dbReference type="InterPro" id="IPR037528">
    <property type="entry name" value="ArgB"/>
</dbReference>
<dbReference type="InterPro" id="IPR001048">
    <property type="entry name" value="Asp/Glu/Uridylate_kinase"/>
</dbReference>
<dbReference type="InterPro" id="IPR001057">
    <property type="entry name" value="Glu/AcGlu_kinase"/>
</dbReference>
<dbReference type="InterPro" id="IPR041727">
    <property type="entry name" value="NAGK-C"/>
</dbReference>
<dbReference type="NCBIfam" id="TIGR00761">
    <property type="entry name" value="argB"/>
    <property type="match status" value="1"/>
</dbReference>
<dbReference type="PANTHER" id="PTHR23342">
    <property type="entry name" value="N-ACETYLGLUTAMATE SYNTHASE"/>
    <property type="match status" value="1"/>
</dbReference>
<dbReference type="PANTHER" id="PTHR23342:SF0">
    <property type="entry name" value="N-ACETYLGLUTAMATE SYNTHASE, MITOCHONDRIAL"/>
    <property type="match status" value="1"/>
</dbReference>
<dbReference type="Pfam" id="PF00696">
    <property type="entry name" value="AA_kinase"/>
    <property type="match status" value="1"/>
</dbReference>
<dbReference type="PIRSF" id="PIRSF000728">
    <property type="entry name" value="NAGK"/>
    <property type="match status" value="1"/>
</dbReference>
<dbReference type="PRINTS" id="PR00474">
    <property type="entry name" value="GLU5KINASE"/>
</dbReference>
<dbReference type="SUPFAM" id="SSF53633">
    <property type="entry name" value="Carbamate kinase-like"/>
    <property type="match status" value="1"/>
</dbReference>
<gene>
    <name evidence="1" type="primary">argB</name>
    <name type="ordered locus">APP7_0244</name>
</gene>
<feature type="chain" id="PRO_1000092844" description="Acetylglutamate kinase">
    <location>
        <begin position="1"/>
        <end position="284"/>
    </location>
</feature>
<feature type="binding site" evidence="1">
    <location>
        <begin position="66"/>
        <end position="67"/>
    </location>
    <ligand>
        <name>substrate</name>
    </ligand>
</feature>
<feature type="binding site" evidence="1">
    <location>
        <position position="88"/>
    </location>
    <ligand>
        <name>substrate</name>
    </ligand>
</feature>
<feature type="binding site" evidence="1">
    <location>
        <position position="179"/>
    </location>
    <ligand>
        <name>substrate</name>
    </ligand>
</feature>
<feature type="site" description="Transition state stabilizer" evidence="1">
    <location>
        <position position="31"/>
    </location>
</feature>
<feature type="site" description="Transition state stabilizer" evidence="1">
    <location>
        <position position="242"/>
    </location>
</feature>